<gene>
    <name evidence="5" type="primary">hilB</name>
    <name evidence="7" type="ordered locus">PAJ_3037</name>
</gene>
<dbReference type="EC" id="1.14.11.75" evidence="4"/>
<dbReference type="EMBL" id="AP012032">
    <property type="protein sequence ID" value="BAK13117.1"/>
    <property type="molecule type" value="Genomic_DNA"/>
</dbReference>
<dbReference type="RefSeq" id="WP_014594864.1">
    <property type="nucleotide sequence ID" value="NC_017531.2"/>
</dbReference>
<dbReference type="SMR" id="A0A0H3L116"/>
<dbReference type="KEGG" id="paj:PAJ_3037"/>
<dbReference type="PATRIC" id="fig|932677.3.peg.3526"/>
<dbReference type="eggNOG" id="COG4340">
    <property type="taxonomic scope" value="Bacteria"/>
</dbReference>
<dbReference type="HOGENOM" id="CLU_1140761_0_0_6"/>
<dbReference type="OrthoDB" id="6681382at2"/>
<dbReference type="BioCyc" id="MetaCyc:MONOMER-21132"/>
<dbReference type="Proteomes" id="UP000006690">
    <property type="component" value="Chromosome"/>
</dbReference>
<dbReference type="GO" id="GO:0051213">
    <property type="term" value="F:dioxygenase activity"/>
    <property type="evidence" value="ECO:0000314"/>
    <property type="project" value="CACAO"/>
</dbReference>
<dbReference type="GO" id="GO:0031418">
    <property type="term" value="F:L-ascorbic acid binding"/>
    <property type="evidence" value="ECO:0007669"/>
    <property type="project" value="UniProtKB-KW"/>
</dbReference>
<dbReference type="GO" id="GO:0046872">
    <property type="term" value="F:metal ion binding"/>
    <property type="evidence" value="ECO:0007669"/>
    <property type="project" value="UniProtKB-KW"/>
</dbReference>
<dbReference type="Gene3D" id="2.60.120.620">
    <property type="entry name" value="q2cbj1_9rhob like domain"/>
    <property type="match status" value="1"/>
</dbReference>
<dbReference type="InterPro" id="IPR018724">
    <property type="entry name" value="2OG-Fe_dioxygenase"/>
</dbReference>
<dbReference type="InterPro" id="IPR054987">
    <property type="entry name" value="Il_dioxgen_HilB"/>
</dbReference>
<dbReference type="NCBIfam" id="NF042428">
    <property type="entry name" value="Il_dioxgen_HilB"/>
    <property type="match status" value="1"/>
</dbReference>
<dbReference type="Pfam" id="PF10014">
    <property type="entry name" value="2OG-Fe_Oxy_2"/>
    <property type="match status" value="1"/>
</dbReference>
<comment type="function">
    <text evidence="3 4">Catalyzes the hydroxylation of L-4'-hydroxyisoleucine (4'-HIL) at the C-4 position to form L-4,4'-dihydroxyisoleucine (4,4'-DIHIL) (PubMed:23554367). Together with HilA, catalyzes the two step conversion of L-isoleucine into L-4,4'-dihydroxyisoleucine (PubMed:23554367). In vitro, in the absence of HilA, can also catalyze the oxidation of L-methionine and the C-4-hydroxylation of L-leucine and L-isoleucine (PubMed:22448874).</text>
</comment>
<comment type="catalytic activity">
    <reaction evidence="4">
        <text>3(1)-hydroxy-L-isoleucine + 2-oxoglutarate + O2 = (4S)-3(1),4-dihydroxy-L-isoleucine + succinate + CO2</text>
        <dbReference type="Rhea" id="RHEA:63876"/>
        <dbReference type="ChEBI" id="CHEBI:15379"/>
        <dbReference type="ChEBI" id="CHEBI:16526"/>
        <dbReference type="ChEBI" id="CHEBI:16810"/>
        <dbReference type="ChEBI" id="CHEBI:30031"/>
        <dbReference type="ChEBI" id="CHEBI:149627"/>
        <dbReference type="ChEBI" id="CHEBI:149628"/>
        <dbReference type="EC" id="1.14.11.75"/>
    </reaction>
    <physiologicalReaction direction="left-to-right" evidence="4">
        <dbReference type="Rhea" id="RHEA:63877"/>
    </physiologicalReaction>
</comment>
<comment type="cofactor">
    <cofactor evidence="3 4">
        <name>L-ascorbate</name>
        <dbReference type="ChEBI" id="CHEBI:38290"/>
    </cofactor>
    <text evidence="1">Binds 1 ascorbate molecule per subunit.</text>
</comment>
<comment type="cofactor">
    <cofactor evidence="3 4">
        <name>Fe(2+)</name>
        <dbReference type="ChEBI" id="CHEBI:29033"/>
    </cofactor>
    <text evidence="1">Binds 1 Fe(2+) ion per subunit.</text>
</comment>
<comment type="biophysicochemical properties">
    <kinetics>
        <KM evidence="3">1.3 mM for L-methionine</KM>
        <KM evidence="3">1.1 mM for L-leucine</KM>
        <KM evidence="3">5.1 mM for L-isoleucine</KM>
    </kinetics>
</comment>
<comment type="similarity">
    <text evidence="6">Belongs to the iron/ascorbate-dependent oxidoreductase family.</text>
</comment>
<evidence type="ECO:0000250" key="1">
    <source>
        <dbReference type="UniProtKB" id="E2GIN1"/>
    </source>
</evidence>
<evidence type="ECO:0000250" key="2">
    <source>
        <dbReference type="UniProtKB" id="Q96323"/>
    </source>
</evidence>
<evidence type="ECO:0000269" key="3">
    <source>
    </source>
</evidence>
<evidence type="ECO:0000269" key="4">
    <source>
    </source>
</evidence>
<evidence type="ECO:0000303" key="5">
    <source>
    </source>
</evidence>
<evidence type="ECO:0000305" key="6"/>
<evidence type="ECO:0000312" key="7">
    <source>
        <dbReference type="EMBL" id="BAK13117.1"/>
    </source>
</evidence>
<feature type="chain" id="PRO_0000454110" description="3(1)-hydroxy-L-isoleucine 4-dioxygenase">
    <location>
        <begin position="1"/>
        <end position="247"/>
    </location>
</feature>
<feature type="binding site" evidence="2">
    <location>
        <position position="160"/>
    </location>
    <ligand>
        <name>Fe cation</name>
        <dbReference type="ChEBI" id="CHEBI:24875"/>
        <note>catalytic</note>
    </ligand>
</feature>
<feature type="binding site" evidence="2">
    <location>
        <position position="162"/>
    </location>
    <ligand>
        <name>Fe cation</name>
        <dbReference type="ChEBI" id="CHEBI:24875"/>
        <note>catalytic</note>
    </ligand>
</feature>
<feature type="binding site" evidence="2">
    <location>
        <position position="213"/>
    </location>
    <ligand>
        <name>Fe cation</name>
        <dbReference type="ChEBI" id="CHEBI:24875"/>
        <note>catalytic</note>
    </ligand>
</feature>
<accession>A0A0H3L116</accession>
<name>HILB_PANAA</name>
<organism>
    <name type="scientific">Pantoea ananatis (strain AJ13355)</name>
    <dbReference type="NCBI Taxonomy" id="932677"/>
    <lineage>
        <taxon>Bacteria</taxon>
        <taxon>Pseudomonadati</taxon>
        <taxon>Pseudomonadota</taxon>
        <taxon>Gammaproteobacteria</taxon>
        <taxon>Enterobacterales</taxon>
        <taxon>Erwiniaceae</taxon>
        <taxon>Pantoea</taxon>
    </lineage>
</organism>
<protein>
    <recommendedName>
        <fullName evidence="6">3(1)-hydroxy-L-isoleucine 4-dioxygenase</fullName>
        <ecNumber evidence="4">1.14.11.75</ecNumber>
    </recommendedName>
    <alternativeName>
        <fullName evidence="6">4'-hydroxy-L-isoleucine 4-dioxygenase</fullName>
    </alternativeName>
</protein>
<keyword id="KW-0223">Dioxygenase</keyword>
<keyword id="KW-0408">Iron</keyword>
<keyword id="KW-0479">Metal-binding</keyword>
<keyword id="KW-0560">Oxidoreductase</keyword>
<keyword id="KW-0847">Vitamin C</keyword>
<sequence length="247" mass="28263">MMEYATHLSRQGYAFIPGDYYRSTEAMQFSNKEDFLDELEELKKGYENLLLDPYSPGNRWRGYAQCKKNEKGELTFGKFNPYKQTKAFNPDTGDIIRDYPLLPEAITRNRLFQTLLHDDLSLVDAYESIGPVDSLTIGIHFFRYQATENEPAYSSPVWLHKDDEDVVFVHMINASPNMLGGDSLIASHPRSIDRVLRLEQLFDTLVVNHDKLHAVTPVGARENSGPAQRDIILITFQKNEEKTACPV</sequence>
<reference key="1">
    <citation type="journal article" date="2012" name="Appl. Microbiol. Biotechnol.">
        <title>The complete genome sequence of Pantoea ananatis AJ13355, an organism with great biotechnological potential.</title>
        <authorList>
            <person name="Hara Y."/>
            <person name="Kadotani N."/>
            <person name="Izui H."/>
            <person name="Katashkina J.I."/>
            <person name="Kuvaeva T.M."/>
            <person name="Andreeva I.G."/>
            <person name="Golubeva L.I."/>
            <person name="Malko D.B."/>
            <person name="Makeev V.J."/>
            <person name="Mashko S.V."/>
            <person name="Kozlov Y.I."/>
        </authorList>
    </citation>
    <scope>NUCLEOTIDE SEQUENCE [LARGE SCALE GENOMIC DNA]</scope>
    <source>
        <strain>AJ13355</strain>
    </source>
</reference>
<reference key="2">
    <citation type="journal article" date="2012" name="FEMS Microbiol. Lett.">
        <title>A novel family of bacterial dioxygenases that catalyse the hydroxylation of free L-amino acids.</title>
        <authorList>
            <person name="Smirnov S.V."/>
            <person name="Sokolov P.M."/>
            <person name="Kodera T."/>
            <person name="Sugiyama M."/>
            <person name="Hibi M."/>
            <person name="Shimizu S."/>
            <person name="Yokozeki K."/>
            <person name="Ogawa J."/>
        </authorList>
    </citation>
    <scope>FUNCTION</scope>
    <scope>COFACTOR</scope>
    <scope>BIOPHYSICOCHEMICAL PROPERTIES</scope>
    <source>
        <strain>AJ13355</strain>
    </source>
</reference>
<reference key="3">
    <citation type="journal article" date="2013" name="MicrobiologyOpen">
        <title>A novel L-isoleucine-4'-dioxygenase and L-isoleucine dihydroxylation cascade in Pantoea ananatis.</title>
        <authorList>
            <person name="Smirnov S.V."/>
            <person name="Sokolov P.M."/>
            <person name="Kotlyarova V.A."/>
            <person name="Samsonova N.N."/>
            <person name="Kodera T."/>
            <person name="Sugiyama M."/>
            <person name="Torii T."/>
            <person name="Hibi M."/>
            <person name="Shimizu S."/>
            <person name="Yokozeki K."/>
            <person name="Ogawa J."/>
        </authorList>
    </citation>
    <scope>FUNCTION</scope>
    <scope>CATALYTIC ACTIVITY</scope>
    <scope>COFACTOR</scope>
    <source>
        <strain>AJ13355</strain>
    </source>
</reference>
<proteinExistence type="evidence at protein level"/>